<keyword id="KW-0028">Amino-acid biosynthesis</keyword>
<keyword id="KW-0100">Branched-chain amino acid biosynthesis</keyword>
<keyword id="KW-0460">Magnesium</keyword>
<keyword id="KW-0479">Metal-binding</keyword>
<keyword id="KW-0521">NADP</keyword>
<keyword id="KW-0560">Oxidoreductase</keyword>
<keyword id="KW-0677">Repeat</keyword>
<reference key="1">
    <citation type="journal article" date="2007" name="Genome Biol.">
        <title>Characterization and modeling of the Haemophilus influenzae core and supragenomes based on the complete genomic sequences of Rd and 12 clinical nontypeable strains.</title>
        <authorList>
            <person name="Hogg J.S."/>
            <person name="Hu F.Z."/>
            <person name="Janto B."/>
            <person name="Boissy R."/>
            <person name="Hayes J."/>
            <person name="Keefe R."/>
            <person name="Post J.C."/>
            <person name="Ehrlich G.D."/>
        </authorList>
    </citation>
    <scope>NUCLEOTIDE SEQUENCE [LARGE SCALE GENOMIC DNA]</scope>
    <source>
        <strain>PittEE</strain>
    </source>
</reference>
<feature type="chain" id="PRO_1000050512" description="Ketol-acid reductoisomerase (NADP(+))">
    <location>
        <begin position="1"/>
        <end position="492"/>
    </location>
</feature>
<feature type="domain" description="KARI N-terminal Rossmann" evidence="2">
    <location>
        <begin position="14"/>
        <end position="208"/>
    </location>
</feature>
<feature type="domain" description="KARI C-terminal knotted 1" evidence="3">
    <location>
        <begin position="209"/>
        <end position="344"/>
    </location>
</feature>
<feature type="domain" description="KARI C-terminal knotted 2" evidence="3">
    <location>
        <begin position="345"/>
        <end position="485"/>
    </location>
</feature>
<feature type="active site" evidence="1">
    <location>
        <position position="132"/>
    </location>
</feature>
<feature type="binding site" evidence="1">
    <location>
        <begin position="45"/>
        <end position="48"/>
    </location>
    <ligand>
        <name>NADP(+)</name>
        <dbReference type="ChEBI" id="CHEBI:58349"/>
    </ligand>
</feature>
<feature type="binding site" evidence="1">
    <location>
        <position position="68"/>
    </location>
    <ligand>
        <name>NADP(+)</name>
        <dbReference type="ChEBI" id="CHEBI:58349"/>
    </ligand>
</feature>
<feature type="binding site" evidence="1">
    <location>
        <position position="76"/>
    </location>
    <ligand>
        <name>NADP(+)</name>
        <dbReference type="ChEBI" id="CHEBI:58349"/>
    </ligand>
</feature>
<feature type="binding site" evidence="1">
    <location>
        <position position="78"/>
    </location>
    <ligand>
        <name>NADP(+)</name>
        <dbReference type="ChEBI" id="CHEBI:58349"/>
    </ligand>
</feature>
<feature type="binding site" evidence="1">
    <location>
        <begin position="108"/>
        <end position="110"/>
    </location>
    <ligand>
        <name>NADP(+)</name>
        <dbReference type="ChEBI" id="CHEBI:58349"/>
    </ligand>
</feature>
<feature type="binding site" evidence="1">
    <location>
        <position position="158"/>
    </location>
    <ligand>
        <name>NADP(+)</name>
        <dbReference type="ChEBI" id="CHEBI:58349"/>
    </ligand>
</feature>
<feature type="binding site" evidence="1">
    <location>
        <position position="217"/>
    </location>
    <ligand>
        <name>Mg(2+)</name>
        <dbReference type="ChEBI" id="CHEBI:18420"/>
        <label>1</label>
    </ligand>
</feature>
<feature type="binding site" evidence="1">
    <location>
        <position position="217"/>
    </location>
    <ligand>
        <name>Mg(2+)</name>
        <dbReference type="ChEBI" id="CHEBI:18420"/>
        <label>2</label>
    </ligand>
</feature>
<feature type="binding site" evidence="1">
    <location>
        <position position="221"/>
    </location>
    <ligand>
        <name>Mg(2+)</name>
        <dbReference type="ChEBI" id="CHEBI:18420"/>
        <label>1</label>
    </ligand>
</feature>
<feature type="binding site" evidence="1">
    <location>
        <position position="389"/>
    </location>
    <ligand>
        <name>Mg(2+)</name>
        <dbReference type="ChEBI" id="CHEBI:18420"/>
        <label>2</label>
    </ligand>
</feature>
<feature type="binding site" evidence="1">
    <location>
        <position position="393"/>
    </location>
    <ligand>
        <name>Mg(2+)</name>
        <dbReference type="ChEBI" id="CHEBI:18420"/>
        <label>2</label>
    </ligand>
</feature>
<feature type="binding site" evidence="1">
    <location>
        <position position="414"/>
    </location>
    <ligand>
        <name>substrate</name>
    </ligand>
</feature>
<comment type="function">
    <text evidence="1">Involved in the biosynthesis of branched-chain amino acids (BCAA). Catalyzes an alkyl-migration followed by a ketol-acid reduction of (S)-2-acetolactate (S2AL) to yield (R)-2,3-dihydroxy-isovalerate. In the isomerase reaction, S2AL is rearranged via a Mg-dependent methyl migration to produce 3-hydroxy-3-methyl-2-ketobutyrate (HMKB). In the reductase reaction, this 2-ketoacid undergoes a metal-dependent reduction by NADPH to yield (R)-2,3-dihydroxy-isovalerate.</text>
</comment>
<comment type="catalytic activity">
    <reaction evidence="1">
        <text>(2R)-2,3-dihydroxy-3-methylbutanoate + NADP(+) = (2S)-2-acetolactate + NADPH + H(+)</text>
        <dbReference type="Rhea" id="RHEA:22068"/>
        <dbReference type="ChEBI" id="CHEBI:15378"/>
        <dbReference type="ChEBI" id="CHEBI:49072"/>
        <dbReference type="ChEBI" id="CHEBI:57783"/>
        <dbReference type="ChEBI" id="CHEBI:58349"/>
        <dbReference type="ChEBI" id="CHEBI:58476"/>
        <dbReference type="EC" id="1.1.1.86"/>
    </reaction>
</comment>
<comment type="catalytic activity">
    <reaction evidence="1">
        <text>(2R,3R)-2,3-dihydroxy-3-methylpentanoate + NADP(+) = (S)-2-ethyl-2-hydroxy-3-oxobutanoate + NADPH + H(+)</text>
        <dbReference type="Rhea" id="RHEA:13493"/>
        <dbReference type="ChEBI" id="CHEBI:15378"/>
        <dbReference type="ChEBI" id="CHEBI:49256"/>
        <dbReference type="ChEBI" id="CHEBI:49258"/>
        <dbReference type="ChEBI" id="CHEBI:57783"/>
        <dbReference type="ChEBI" id="CHEBI:58349"/>
        <dbReference type="EC" id="1.1.1.86"/>
    </reaction>
</comment>
<comment type="cofactor">
    <cofactor evidence="1">
        <name>Mg(2+)</name>
        <dbReference type="ChEBI" id="CHEBI:18420"/>
    </cofactor>
    <text evidence="1">Binds 2 magnesium ions per subunit.</text>
</comment>
<comment type="pathway">
    <text evidence="1">Amino-acid biosynthesis; L-isoleucine biosynthesis; L-isoleucine from 2-oxobutanoate: step 2/4.</text>
</comment>
<comment type="pathway">
    <text evidence="1">Amino-acid biosynthesis; L-valine biosynthesis; L-valine from pyruvate: step 2/4.</text>
</comment>
<comment type="similarity">
    <text evidence="1">Belongs to the ketol-acid reductoisomerase family.</text>
</comment>
<dbReference type="EC" id="1.1.1.86" evidence="1"/>
<dbReference type="EMBL" id="CP000671">
    <property type="protein sequence ID" value="ABQ99035.1"/>
    <property type="molecule type" value="Genomic_DNA"/>
</dbReference>
<dbReference type="SMR" id="A5UE34"/>
<dbReference type="KEGG" id="hip:CGSHiEE_08680"/>
<dbReference type="HOGENOM" id="CLU_551905_0_0_6"/>
<dbReference type="UniPathway" id="UPA00047">
    <property type="reaction ID" value="UER00056"/>
</dbReference>
<dbReference type="UniPathway" id="UPA00049">
    <property type="reaction ID" value="UER00060"/>
</dbReference>
<dbReference type="GO" id="GO:0005829">
    <property type="term" value="C:cytosol"/>
    <property type="evidence" value="ECO:0007669"/>
    <property type="project" value="TreeGrafter"/>
</dbReference>
<dbReference type="GO" id="GO:0004455">
    <property type="term" value="F:ketol-acid reductoisomerase activity"/>
    <property type="evidence" value="ECO:0007669"/>
    <property type="project" value="UniProtKB-UniRule"/>
</dbReference>
<dbReference type="GO" id="GO:0000287">
    <property type="term" value="F:magnesium ion binding"/>
    <property type="evidence" value="ECO:0007669"/>
    <property type="project" value="UniProtKB-UniRule"/>
</dbReference>
<dbReference type="GO" id="GO:0009097">
    <property type="term" value="P:isoleucine biosynthetic process"/>
    <property type="evidence" value="ECO:0007669"/>
    <property type="project" value="UniProtKB-UniRule"/>
</dbReference>
<dbReference type="GO" id="GO:0009099">
    <property type="term" value="P:L-valine biosynthetic process"/>
    <property type="evidence" value="ECO:0007669"/>
    <property type="project" value="UniProtKB-UniRule"/>
</dbReference>
<dbReference type="FunFam" id="1.10.1040.10:FF:000007">
    <property type="entry name" value="Ketol-acid reductoisomerase (NADP(+))"/>
    <property type="match status" value="1"/>
</dbReference>
<dbReference type="FunFam" id="3.40.50.720:FF:000043">
    <property type="entry name" value="Ketol-acid reductoisomerase (NADP(+))"/>
    <property type="match status" value="1"/>
</dbReference>
<dbReference type="Gene3D" id="1.10.1040.10">
    <property type="entry name" value="N-(1-d-carboxylethyl)-l-norvaline Dehydrogenase, domain 2"/>
    <property type="match status" value="1"/>
</dbReference>
<dbReference type="Gene3D" id="3.40.50.720">
    <property type="entry name" value="NAD(P)-binding Rossmann-like Domain"/>
    <property type="match status" value="1"/>
</dbReference>
<dbReference type="HAMAP" id="MF_00435">
    <property type="entry name" value="IlvC"/>
    <property type="match status" value="1"/>
</dbReference>
<dbReference type="InterPro" id="IPR008927">
    <property type="entry name" value="6-PGluconate_DH-like_C_sf"/>
</dbReference>
<dbReference type="InterPro" id="IPR013328">
    <property type="entry name" value="6PGD_dom2"/>
</dbReference>
<dbReference type="InterPro" id="IPR013023">
    <property type="entry name" value="KARI"/>
</dbReference>
<dbReference type="InterPro" id="IPR000506">
    <property type="entry name" value="KARI_C"/>
</dbReference>
<dbReference type="InterPro" id="IPR013116">
    <property type="entry name" value="KARI_N"/>
</dbReference>
<dbReference type="InterPro" id="IPR036291">
    <property type="entry name" value="NAD(P)-bd_dom_sf"/>
</dbReference>
<dbReference type="NCBIfam" id="TIGR00465">
    <property type="entry name" value="ilvC"/>
    <property type="match status" value="1"/>
</dbReference>
<dbReference type="NCBIfam" id="NF003557">
    <property type="entry name" value="PRK05225.1"/>
    <property type="match status" value="1"/>
</dbReference>
<dbReference type="PANTHER" id="PTHR21371">
    <property type="entry name" value="KETOL-ACID REDUCTOISOMERASE, MITOCHONDRIAL"/>
    <property type="match status" value="1"/>
</dbReference>
<dbReference type="PANTHER" id="PTHR21371:SF1">
    <property type="entry name" value="KETOL-ACID REDUCTOISOMERASE, MITOCHONDRIAL"/>
    <property type="match status" value="1"/>
</dbReference>
<dbReference type="Pfam" id="PF01450">
    <property type="entry name" value="KARI_C"/>
    <property type="match status" value="2"/>
</dbReference>
<dbReference type="Pfam" id="PF07991">
    <property type="entry name" value="KARI_N"/>
    <property type="match status" value="1"/>
</dbReference>
<dbReference type="SUPFAM" id="SSF48179">
    <property type="entry name" value="6-phosphogluconate dehydrogenase C-terminal domain-like"/>
    <property type="match status" value="2"/>
</dbReference>
<dbReference type="SUPFAM" id="SSF51735">
    <property type="entry name" value="NAD(P)-binding Rossmann-fold domains"/>
    <property type="match status" value="1"/>
</dbReference>
<dbReference type="PROSITE" id="PS51851">
    <property type="entry name" value="KARI_C"/>
    <property type="match status" value="2"/>
</dbReference>
<dbReference type="PROSITE" id="PS51850">
    <property type="entry name" value="KARI_N"/>
    <property type="match status" value="1"/>
</dbReference>
<evidence type="ECO:0000255" key="1">
    <source>
        <dbReference type="HAMAP-Rule" id="MF_00435"/>
    </source>
</evidence>
<evidence type="ECO:0000255" key="2">
    <source>
        <dbReference type="PROSITE-ProRule" id="PRU01197"/>
    </source>
</evidence>
<evidence type="ECO:0000255" key="3">
    <source>
        <dbReference type="PROSITE-ProRule" id="PRU01198"/>
    </source>
</evidence>
<proteinExistence type="inferred from homology"/>
<accession>A5UE34</accession>
<protein>
    <recommendedName>
        <fullName evidence="1">Ketol-acid reductoisomerase (NADP(+))</fullName>
        <shortName evidence="1">KARI</shortName>
        <ecNumber evidence="1">1.1.1.86</ecNumber>
    </recommendedName>
    <alternativeName>
        <fullName evidence="1">Acetohydroxy-acid isomeroreductase</fullName>
        <shortName evidence="1">AHIR</shortName>
    </alternativeName>
    <alternativeName>
        <fullName evidence="1">Alpha-keto-beta-hydroxylacyl reductoisomerase</fullName>
    </alternativeName>
    <alternativeName>
        <fullName evidence="1">Ketol-acid reductoisomerase type 2</fullName>
    </alternativeName>
    <alternativeName>
        <fullName evidence="1">Ketol-acid reductoisomerase type II</fullName>
    </alternativeName>
</protein>
<gene>
    <name evidence="1" type="primary">ilvC</name>
    <name type="ordered locus">CGSHiEE_08680</name>
</gene>
<sequence length="492" mass="54239">MANYFNTLNLRQKLDQLGRCRFMDREEFADEANFLKGKKIVIVGCGAQGLNQGLNMRDSGLDISYALRPEAIAEKRASFQRATENGFKVGTYEELIPTADLVVNLTPDKQHSKVVADVMPLMKKDSAFGYSHGFNIVEVGEEIRKDITVVMVAPKCPGTEVREEYKRGFGVPTLIAVHPENDPKGEGMAIAKAWAAATGGHKAGVLESSFVAEVKSDLMGEQTILCGMLQAGSIVCYDKLVADGKDPAYAGKLIQYGWETITEALKQGGITLMMDRLSNSAKLRAFELAEQIKESLGFLYYKHMDDIISGHFSATMMADWANGDKDLFAWREATGKTAFENAPKYDGKISEQEYFDNGVLMIAMVKAGVELAFDAMVASGIYEESAYYESLHELPLIANTIARKRLYEMNVVISDTAEYGNYLFSNVATPILAKEIIPNLQKGDLGEPTPAVEVDNITLRDVNDAIRNHPVELIGQELRGYMTDMKRIAVAG</sequence>
<name>ILVC_HAEIE</name>
<organism>
    <name type="scientific">Haemophilus influenzae (strain PittEE)</name>
    <dbReference type="NCBI Taxonomy" id="374930"/>
    <lineage>
        <taxon>Bacteria</taxon>
        <taxon>Pseudomonadati</taxon>
        <taxon>Pseudomonadota</taxon>
        <taxon>Gammaproteobacteria</taxon>
        <taxon>Pasteurellales</taxon>
        <taxon>Pasteurellaceae</taxon>
        <taxon>Haemophilus</taxon>
    </lineage>
</organism>